<proteinExistence type="evidence at transcript level"/>
<protein>
    <recommendedName>
        <fullName>Sodium/potassium-transporting ATPase subunit beta-2</fullName>
    </recommendedName>
    <alternativeName>
        <fullName>Sodium/potassium-dependent ATPase subunit beta-2</fullName>
    </alternativeName>
</protein>
<feature type="chain" id="PRO_0000265959" description="Sodium/potassium-transporting ATPase subunit beta-2">
    <location>
        <begin position="1"/>
        <end position="290"/>
    </location>
</feature>
<feature type="topological domain" description="Cytoplasmic" evidence="3">
    <location>
        <begin position="1"/>
        <end position="39"/>
    </location>
</feature>
<feature type="transmembrane region" description="Helical; Signal-anchor for type II membrane protein" evidence="3">
    <location>
        <begin position="40"/>
        <end position="67"/>
    </location>
</feature>
<feature type="topological domain" description="Extracellular" evidence="3">
    <location>
        <begin position="68"/>
        <end position="290"/>
    </location>
</feature>
<feature type="region of interest" description="immunoglobulin-like" evidence="1">
    <location>
        <begin position="193"/>
        <end position="290"/>
    </location>
</feature>
<feature type="glycosylation site" description="N-linked (GlcNAc...) asparagine" evidence="3">
    <location>
        <position position="96"/>
    </location>
</feature>
<feature type="glycosylation site" description="N-linked (GlcNAc...) asparagine" evidence="3">
    <location>
        <position position="118"/>
    </location>
</feature>
<feature type="glycosylation site" description="N-linked (GlcNAc...) asparagine" evidence="3">
    <location>
        <position position="153"/>
    </location>
</feature>
<feature type="glycosylation site" description="N-linked (GlcNAc...) asparagine" evidence="3">
    <location>
        <position position="159"/>
    </location>
</feature>
<feature type="glycosylation site" description="N-linked (GlcNAc...) asparagine" evidence="3">
    <location>
        <position position="193"/>
    </location>
</feature>
<feature type="glycosylation site" description="N-linked (GlcNAc...) asparagine" evidence="3">
    <location>
        <position position="197"/>
    </location>
</feature>
<feature type="glycosylation site" description="N-linked (GlcNAc...) asparagine" evidence="3">
    <location>
        <position position="238"/>
    </location>
</feature>
<feature type="disulfide bond" evidence="1">
    <location>
        <begin position="129"/>
        <end position="150"/>
    </location>
</feature>
<feature type="disulfide bond" evidence="1">
    <location>
        <begin position="160"/>
        <end position="177"/>
    </location>
</feature>
<feature type="disulfide bond" evidence="1">
    <location>
        <begin position="200"/>
        <end position="261"/>
    </location>
</feature>
<comment type="function">
    <text evidence="1">This is the non-catalytic component of the active enzyme, which catalyzes the hydrolysis of ATP coupled with the exchange of Na(+) and K(+) ions across the plasma membrane. The exact function of the beta-2 subunit is not known (By similarity).</text>
</comment>
<comment type="function">
    <text evidence="1">Mediates cell adhesion of neurons and astrocytes, and promotes neurite outgrowth.</text>
</comment>
<comment type="subunit">
    <text evidence="2 4">The sodium/potassium-transporting ATPase is composed of a catalytic alpha subunit, an auxiliary non-catalytic beta subunit and an additional regulatory subunit. Interacts with BSG (By similarity).</text>
</comment>
<comment type="subcellular location">
    <subcellularLocation>
        <location evidence="1">Cell membrane</location>
        <topology evidence="1">Single-pass type II membrane protein</topology>
    </subcellularLocation>
</comment>
<comment type="domain">
    <text evidence="1">The C-terminal lobe folds into an immunoglobulin-like domain and mediates cell adhesion properties.</text>
</comment>
<comment type="similarity">
    <text evidence="4">Belongs to the X(+)/potassium ATPases subunit beta family.</text>
</comment>
<reference key="1">
    <citation type="submission" date="2003-12" db="EMBL/GenBank/DDBJ databases">
        <title>Na+-K+-ATPase beta 2 subunit is highly conserved in Ochotona curzoniae (pika).</title>
        <authorList>
            <person name="Zhang C."/>
            <person name="Shang A."/>
            <person name="Hou B."/>
            <person name="Ge R."/>
        </authorList>
    </citation>
    <scope>NUCLEOTIDE SEQUENCE [MRNA]</scope>
    <source>
        <tissue>Brain</tissue>
    </source>
</reference>
<organism>
    <name type="scientific">Ochotona curzoniae</name>
    <name type="common">Black-lipped pika</name>
    <dbReference type="NCBI Taxonomy" id="130825"/>
    <lineage>
        <taxon>Eukaryota</taxon>
        <taxon>Metazoa</taxon>
        <taxon>Chordata</taxon>
        <taxon>Craniata</taxon>
        <taxon>Vertebrata</taxon>
        <taxon>Euteleostomi</taxon>
        <taxon>Mammalia</taxon>
        <taxon>Eutheria</taxon>
        <taxon>Euarchontoglires</taxon>
        <taxon>Glires</taxon>
        <taxon>Lagomorpha</taxon>
        <taxon>Ochotonidae</taxon>
        <taxon>Ochotona</taxon>
    </lineage>
</organism>
<dbReference type="EMBL" id="AY505494">
    <property type="protein sequence ID" value="AAS84453.1"/>
    <property type="molecule type" value="mRNA"/>
</dbReference>
<dbReference type="RefSeq" id="XP_040856528.1">
    <property type="nucleotide sequence ID" value="XM_041000594.1"/>
</dbReference>
<dbReference type="SMR" id="Q5J583"/>
<dbReference type="GlyCosmos" id="Q5J583">
    <property type="glycosylation" value="7 sites, No reported glycans"/>
</dbReference>
<dbReference type="GeneID" id="121169837"/>
<dbReference type="GO" id="GO:0005890">
    <property type="term" value="C:sodium:potassium-exchanging ATPase complex"/>
    <property type="evidence" value="ECO:0007669"/>
    <property type="project" value="InterPro"/>
</dbReference>
<dbReference type="GO" id="GO:0001671">
    <property type="term" value="F:ATPase activator activity"/>
    <property type="evidence" value="ECO:0007669"/>
    <property type="project" value="TreeGrafter"/>
</dbReference>
<dbReference type="GO" id="GO:0007155">
    <property type="term" value="P:cell adhesion"/>
    <property type="evidence" value="ECO:0007669"/>
    <property type="project" value="UniProtKB-KW"/>
</dbReference>
<dbReference type="GO" id="GO:0030007">
    <property type="term" value="P:intracellular potassium ion homeostasis"/>
    <property type="evidence" value="ECO:0007669"/>
    <property type="project" value="TreeGrafter"/>
</dbReference>
<dbReference type="GO" id="GO:0006883">
    <property type="term" value="P:intracellular sodium ion homeostasis"/>
    <property type="evidence" value="ECO:0007669"/>
    <property type="project" value="TreeGrafter"/>
</dbReference>
<dbReference type="GO" id="GO:1990573">
    <property type="term" value="P:potassium ion import across plasma membrane"/>
    <property type="evidence" value="ECO:0007669"/>
    <property type="project" value="TreeGrafter"/>
</dbReference>
<dbReference type="GO" id="GO:0036376">
    <property type="term" value="P:sodium ion export across plasma membrane"/>
    <property type="evidence" value="ECO:0007669"/>
    <property type="project" value="TreeGrafter"/>
</dbReference>
<dbReference type="FunFam" id="1.20.5.170:FF:000068">
    <property type="entry name" value="Sodium/potassium-transporting ATPase subunit beta"/>
    <property type="match status" value="1"/>
</dbReference>
<dbReference type="FunFam" id="2.60.40.1660:FF:000003">
    <property type="entry name" value="Sodium/potassium-transporting ATPase subunit beta"/>
    <property type="match status" value="1"/>
</dbReference>
<dbReference type="Gene3D" id="1.20.5.170">
    <property type="match status" value="1"/>
</dbReference>
<dbReference type="Gene3D" id="2.60.40.1660">
    <property type="entry name" value="Na, k-atpase alpha subunit"/>
    <property type="match status" value="1"/>
</dbReference>
<dbReference type="InterPro" id="IPR000402">
    <property type="entry name" value="Na/K_ATPase_sub_beta"/>
</dbReference>
<dbReference type="InterPro" id="IPR038702">
    <property type="entry name" value="Na/K_ATPase_sub_beta_sf"/>
</dbReference>
<dbReference type="NCBIfam" id="TIGR01107">
    <property type="entry name" value="Na_K_ATPase_bet"/>
    <property type="match status" value="1"/>
</dbReference>
<dbReference type="PANTHER" id="PTHR11523">
    <property type="entry name" value="SODIUM/POTASSIUM-DEPENDENT ATPASE BETA SUBUNIT"/>
    <property type="match status" value="1"/>
</dbReference>
<dbReference type="PANTHER" id="PTHR11523:SF26">
    <property type="entry name" value="SODIUM_POTASSIUM-TRANSPORTING ATPASE SUBUNIT BETA-2"/>
    <property type="match status" value="1"/>
</dbReference>
<dbReference type="Pfam" id="PF00287">
    <property type="entry name" value="Na_K-ATPase"/>
    <property type="match status" value="1"/>
</dbReference>
<dbReference type="PROSITE" id="PS00390">
    <property type="entry name" value="ATPASE_NA_K_BETA_1"/>
    <property type="match status" value="1"/>
</dbReference>
<dbReference type="PROSITE" id="PS00391">
    <property type="entry name" value="ATPASE_NA_K_BETA_2"/>
    <property type="match status" value="1"/>
</dbReference>
<name>AT1B2_OCHCU</name>
<accession>Q5J583</accession>
<gene>
    <name type="primary">ATP1B2</name>
    <name type="synonym">NKA1B2</name>
</gene>
<sequence>MVIQKEKKSCGQVVEEWKEFVWNPRTHQFMGRTGTSWAFILLFYLVFYGFLTAMFTLTMWVMLQTVSDHTPKYQDRLATPGLMIRPKTENLDVIVNVSDTESWDQHVQKLNKFLEPYNDSIQAQKNDVCRPGRYYEQPDNGVLNYPKRACQFNRTQLGNCSGIGDPTHYGYSTGQPCVFIKMNRVINFYAGANQSMNVTCAGKRDEDAENLGNFVMFPANGNIDLMYFPYYGKKFHVNYTQPLVAVKFLNVTPNVEVNVECRINAANIATDDERDKFAGRVAFKLRINKT</sequence>
<keyword id="KW-0130">Cell adhesion</keyword>
<keyword id="KW-1003">Cell membrane</keyword>
<keyword id="KW-1015">Disulfide bond</keyword>
<keyword id="KW-0325">Glycoprotein</keyword>
<keyword id="KW-0406">Ion transport</keyword>
<keyword id="KW-0472">Membrane</keyword>
<keyword id="KW-0630">Potassium</keyword>
<keyword id="KW-0633">Potassium transport</keyword>
<keyword id="KW-0735">Signal-anchor</keyword>
<keyword id="KW-0915">Sodium</keyword>
<keyword id="KW-0739">Sodium transport</keyword>
<keyword id="KW-0740">Sodium/potassium transport</keyword>
<keyword id="KW-0812">Transmembrane</keyword>
<keyword id="KW-1133">Transmembrane helix</keyword>
<keyword id="KW-0813">Transport</keyword>
<evidence type="ECO:0000250" key="1"/>
<evidence type="ECO:0000250" key="2">
    <source>
        <dbReference type="UniProtKB" id="P14231"/>
    </source>
</evidence>
<evidence type="ECO:0000255" key="3"/>
<evidence type="ECO:0000305" key="4"/>